<accession>E1BB03</accession>
<gene>
    <name type="primary">ZRANB3</name>
</gene>
<name>ZRAB3_BOVIN</name>
<reference key="1">
    <citation type="journal article" date="2009" name="Genome Biol.">
        <title>A whole-genome assembly of the domestic cow, Bos taurus.</title>
        <authorList>
            <person name="Zimin A.V."/>
            <person name="Delcher A.L."/>
            <person name="Florea L."/>
            <person name="Kelley D.R."/>
            <person name="Schatz M.C."/>
            <person name="Puiu D."/>
            <person name="Hanrahan F."/>
            <person name="Pertea G."/>
            <person name="Van Tassell C.P."/>
            <person name="Sonstegard T.S."/>
            <person name="Marcais G."/>
            <person name="Roberts M."/>
            <person name="Subramanian P."/>
            <person name="Yorke J.A."/>
            <person name="Salzberg S.L."/>
        </authorList>
    </citation>
    <scope>NUCLEOTIDE SEQUENCE [LARGE SCALE GENOMIC DNA]</scope>
    <source>
        <strain>Hereford</strain>
    </source>
</reference>
<sequence length="1074" mass="121768">MSRGHNIKKSLTPQISCSTSESYKQLDFLPDKLRAKLLPFQKDGITFALRRDGRCMVADEMGLGKTVQAIGIAYFYKEEWPLLIVVPSSLRYPWTEEIEKWIPELSPEEINVIQNKTDVGRISTSKVTVLGYGLLTTDAETLIDALNNQNFKVVIVDESHYMKSRSATRSRILLPIVQKAKRAILLTGTPALGRPEELFMQIEALFPQKFGTWTEYAKRYCNAHVRYFGRRSQWDCRGASNLNELHQLLSDIMIRRLKTEVLTQLPPKIRQRIPFDLPSAAAKELNSSFEEWEKLMRDPYSGATETVMGLITRMFKQTAIAKAGAVKDYIKMMLQNDSLKFLVFAHHLSMLQACTEAVIENKTRYIRIDGSVPSSERIHLVNQFQKDPETRVAILSIQAAGQGLTFTAATHVVFAELYWDPGHIKQAEDRAHRIGQCSSVNIHYLIANGTLDTLMWGMLNRKAQVTGSTLNGRKEKLQAEEGDKEKWDFLQFAEAWTPNERSEELRDEMLFTHFEKEKQRDIRSFFLPNAKKRQLETSCDESRVSQEKNTIVPADPVKTATRGDESDLEPEAKKLKSVAIDDPCRPPEEQPCRPGQAEALLTFGICKAKAQATTPAFCGEGWQCAFCTYINNSVLPYCEMCENPRGGAVPQIDSLNQTQNKNKNEKDDSQDTSKKIQTSSDGEKQVLAHSTPEPLAKSKEEISTTESEDRLTPQPGDEQLKNWPVYDTLMFCASKNTDRIHVYTKDGNQMNCNFIPLDIKLDLWEDLPASFQLKQNRSLILRFVREWSSLTAMKQKIIKKSGQLFRSPVLALEEIAKQQTKQNSTKRYITKEDVAAASMDKVKNDGGHVRLITKGPKPGDPSTKEFLEGGECVPFLNPCTAQGDLILKASTSKGYLQAVDNEGNPLCLRCQQPTCQTKQERKADAWDSRFCSLKCQEEFWIRSNNSYLRAKVFEIEHGVCQLCNLNAQELFLRLRDAPKSQRKSLLDATWTSKLPLEQLNEMIRSPGEGHFWQVDHIKPVSGGGGQCSLDNLQTLCTVCHRERTAQQAKERSQVRRQSLASNHGSDITRFLVKK</sequence>
<keyword id="KW-0067">ATP-binding</keyword>
<keyword id="KW-0158">Chromosome</keyword>
<keyword id="KW-0227">DNA damage</keyword>
<keyword id="KW-0234">DNA repair</keyword>
<keyword id="KW-0255">Endonuclease</keyword>
<keyword id="KW-0347">Helicase</keyword>
<keyword id="KW-0378">Hydrolase</keyword>
<keyword id="KW-0479">Metal-binding</keyword>
<keyword id="KW-0511">Multifunctional enzyme</keyword>
<keyword id="KW-0540">Nuclease</keyword>
<keyword id="KW-0547">Nucleotide-binding</keyword>
<keyword id="KW-0539">Nucleus</keyword>
<keyword id="KW-0597">Phosphoprotein</keyword>
<keyword id="KW-1185">Reference proteome</keyword>
<keyword id="KW-0862">Zinc</keyword>
<keyword id="KW-0863">Zinc-finger</keyword>
<feature type="chain" id="PRO_0000419489" description="DNA annealing helicase and endonuclease ZRANB3">
    <location>
        <begin position="1"/>
        <end position="1074"/>
    </location>
</feature>
<feature type="domain" description="Helicase ATP-binding" evidence="4">
    <location>
        <begin position="46"/>
        <end position="208"/>
    </location>
</feature>
<feature type="domain" description="Helicase C-terminal" evidence="5">
    <location>
        <begin position="325"/>
        <end position="481"/>
    </location>
</feature>
<feature type="domain" description="HNH">
    <location>
        <begin position="1006"/>
        <end position="1046"/>
    </location>
</feature>
<feature type="zinc finger region" description="RanBP2-type" evidence="3">
    <location>
        <begin position="617"/>
        <end position="647"/>
    </location>
</feature>
<feature type="region of interest" description="DNA annealing helicase activity" evidence="1">
    <location>
        <begin position="46"/>
        <end position="481"/>
    </location>
</feature>
<feature type="region of interest" description="Disordered" evidence="6">
    <location>
        <begin position="659"/>
        <end position="719"/>
    </location>
</feature>
<feature type="region of interest" description="Endonuclease activity" evidence="1">
    <location>
        <begin position="1006"/>
        <end position="1074"/>
    </location>
</feature>
<feature type="short sequence motif" description="DEAH box">
    <location>
        <begin position="157"/>
        <end position="160"/>
    </location>
</feature>
<feature type="short sequence motif" description="PIP-box">
    <location>
        <begin position="519"/>
        <end position="526"/>
    </location>
</feature>
<feature type="short sequence motif" description="APIM motif">
    <location>
        <begin position="1069"/>
        <end position="1073"/>
    </location>
</feature>
<feature type="compositionally biased region" description="Basic and acidic residues" evidence="6">
    <location>
        <begin position="662"/>
        <end position="674"/>
    </location>
</feature>
<feature type="compositionally biased region" description="Basic and acidic residues" evidence="6">
    <location>
        <begin position="696"/>
        <end position="711"/>
    </location>
</feature>
<feature type="binding site" evidence="4">
    <location>
        <begin position="59"/>
        <end position="66"/>
    </location>
    <ligand>
        <name>ATP</name>
        <dbReference type="ChEBI" id="CHEBI:30616"/>
    </ligand>
</feature>
<feature type="modified residue" description="Phosphoserine" evidence="2">
    <location>
        <position position="566"/>
    </location>
</feature>
<organism>
    <name type="scientific">Bos taurus</name>
    <name type="common">Bovine</name>
    <dbReference type="NCBI Taxonomy" id="9913"/>
    <lineage>
        <taxon>Eukaryota</taxon>
        <taxon>Metazoa</taxon>
        <taxon>Chordata</taxon>
        <taxon>Craniata</taxon>
        <taxon>Vertebrata</taxon>
        <taxon>Euteleostomi</taxon>
        <taxon>Mammalia</taxon>
        <taxon>Eutheria</taxon>
        <taxon>Laurasiatheria</taxon>
        <taxon>Artiodactyla</taxon>
        <taxon>Ruminantia</taxon>
        <taxon>Pecora</taxon>
        <taxon>Bovidae</taxon>
        <taxon>Bovinae</taxon>
        <taxon>Bos</taxon>
    </lineage>
</organism>
<proteinExistence type="inferred from homology"/>
<comment type="function">
    <text evidence="2">DNA annealing helicase and endonuclease required to maintain genome stability at stalled or collapsed replication forks by facilitating fork restart and limiting inappropriate recombination that could occur during template switching events. Recruited to the sites of stalled DNA replication by polyubiquitinated PCNA and acts as a structure-specific endonuclease that cleaves the replication fork D-loop intermediate, generating an accessible 3'-OH group in the template of the leading strand, which is amenable to extension by DNA polymerase. In addition to endonuclease activity, also catalyzes the fork regression via annealing helicase activity in order to prevent disintegration of the replication fork and the formation of double-strand breaks.</text>
</comment>
<comment type="subunit">
    <text evidence="2">Interacts (via PIP-box and RanBP2-type zinc finger) with PCNA (when PCNA is polyubiquitinated via 'Lys-63'-linked polyubiquitin).</text>
</comment>
<comment type="subcellular location">
    <subcellularLocation>
        <location evidence="2">Nucleus</location>
    </subcellularLocation>
    <subcellularLocation>
        <location evidence="2">Chromosome</location>
    </subcellularLocation>
    <text evidence="2">Following DNA damage, recruited to sites of DNA damage and stalled replication forks by polyubiquitinated PCNA.</text>
</comment>
<comment type="domain">
    <text evidence="2">The PIP-box mediates the interaction with PCNA, while the RanBP2-type zinc finger mediates binding to 'Lys-63'-linked polyubiquitin.</text>
</comment>
<comment type="miscellaneous">
    <text evidence="2">In contrast to classical helicases that unwing DNA, annealing helicases rewind it.</text>
</comment>
<comment type="similarity">
    <text evidence="7">Belongs to the SNF2/RAD54 helicase family.</text>
</comment>
<evidence type="ECO:0000250" key="1"/>
<evidence type="ECO:0000250" key="2">
    <source>
        <dbReference type="UniProtKB" id="Q5FWF4"/>
    </source>
</evidence>
<evidence type="ECO:0000255" key="3">
    <source>
        <dbReference type="PROSITE-ProRule" id="PRU00322"/>
    </source>
</evidence>
<evidence type="ECO:0000255" key="4">
    <source>
        <dbReference type="PROSITE-ProRule" id="PRU00541"/>
    </source>
</evidence>
<evidence type="ECO:0000255" key="5">
    <source>
        <dbReference type="PROSITE-ProRule" id="PRU00542"/>
    </source>
</evidence>
<evidence type="ECO:0000256" key="6">
    <source>
        <dbReference type="SAM" id="MobiDB-lite"/>
    </source>
</evidence>
<evidence type="ECO:0000305" key="7"/>
<dbReference type="EC" id="3.6.4.-"/>
<dbReference type="EC" id="3.1.-.-"/>
<dbReference type="EMBL" id="DAAA02005001">
    <property type="status" value="NOT_ANNOTATED_CDS"/>
    <property type="molecule type" value="Genomic_DNA"/>
</dbReference>
<dbReference type="EMBL" id="DAAA02005002">
    <property type="status" value="NOT_ANNOTATED_CDS"/>
    <property type="molecule type" value="Genomic_DNA"/>
</dbReference>
<dbReference type="SMR" id="E1BB03"/>
<dbReference type="FunCoup" id="E1BB03">
    <property type="interactions" value="1150"/>
</dbReference>
<dbReference type="STRING" id="9913.ENSBTAP00000038188"/>
<dbReference type="PaxDb" id="9913-ENSBTAP00000038188"/>
<dbReference type="Ensembl" id="ENSBTAT00000073311.2">
    <property type="protein sequence ID" value="ENSBTAP00000062570.2"/>
    <property type="gene ID" value="ENSBTAG00000026842.6"/>
</dbReference>
<dbReference type="VGNC" id="VGNC:37373">
    <property type="gene designation" value="ZRANB3"/>
</dbReference>
<dbReference type="eggNOG" id="KOG1000">
    <property type="taxonomic scope" value="Eukaryota"/>
</dbReference>
<dbReference type="GeneTree" id="ENSGT00940000158559"/>
<dbReference type="InParanoid" id="E1BB03"/>
<dbReference type="Proteomes" id="UP000009136">
    <property type="component" value="Chromosome 2"/>
</dbReference>
<dbReference type="GO" id="GO:0043596">
    <property type="term" value="C:nuclear replication fork"/>
    <property type="evidence" value="ECO:0000250"/>
    <property type="project" value="UniProtKB"/>
</dbReference>
<dbReference type="GO" id="GO:0005524">
    <property type="term" value="F:ATP binding"/>
    <property type="evidence" value="ECO:0007669"/>
    <property type="project" value="UniProtKB-KW"/>
</dbReference>
<dbReference type="GO" id="GO:0036310">
    <property type="term" value="F:ATP-dependent DNA/DNA annealing activity"/>
    <property type="evidence" value="ECO:0000250"/>
    <property type="project" value="UniProtKB"/>
</dbReference>
<dbReference type="GO" id="GO:0004520">
    <property type="term" value="F:DNA endonuclease activity"/>
    <property type="evidence" value="ECO:0000250"/>
    <property type="project" value="UniProtKB"/>
</dbReference>
<dbReference type="GO" id="GO:0004386">
    <property type="term" value="F:helicase activity"/>
    <property type="evidence" value="ECO:0007669"/>
    <property type="project" value="UniProtKB-KW"/>
</dbReference>
<dbReference type="GO" id="GO:0070530">
    <property type="term" value="F:K63-linked polyubiquitin modification-dependent protein binding"/>
    <property type="evidence" value="ECO:0000250"/>
    <property type="project" value="UniProtKB"/>
</dbReference>
<dbReference type="GO" id="GO:0008270">
    <property type="term" value="F:zinc ion binding"/>
    <property type="evidence" value="ECO:0007669"/>
    <property type="project" value="UniProtKB-KW"/>
</dbReference>
<dbReference type="GO" id="GO:0006974">
    <property type="term" value="P:DNA damage response"/>
    <property type="evidence" value="ECO:0000250"/>
    <property type="project" value="UniProtKB"/>
</dbReference>
<dbReference type="GO" id="GO:0006281">
    <property type="term" value="P:DNA repair"/>
    <property type="evidence" value="ECO:0000250"/>
    <property type="project" value="UniProtKB"/>
</dbReference>
<dbReference type="GO" id="GO:0031297">
    <property type="term" value="P:replication fork processing"/>
    <property type="evidence" value="ECO:0000250"/>
    <property type="project" value="UniProtKB"/>
</dbReference>
<dbReference type="GO" id="GO:0009411">
    <property type="term" value="P:response to UV"/>
    <property type="evidence" value="ECO:0000250"/>
    <property type="project" value="UniProtKB"/>
</dbReference>
<dbReference type="CDD" id="cd18010">
    <property type="entry name" value="DEXHc_HARP_SMARCAL1"/>
    <property type="match status" value="1"/>
</dbReference>
<dbReference type="CDD" id="cd00085">
    <property type="entry name" value="HNHc"/>
    <property type="match status" value="1"/>
</dbReference>
<dbReference type="CDD" id="cd18793">
    <property type="entry name" value="SF2_C_SNF"/>
    <property type="match status" value="1"/>
</dbReference>
<dbReference type="FunFam" id="3.40.50.10810:FF:000024">
    <property type="entry name" value="DNA annealing helicase and endonuclease ZRANB3"/>
    <property type="match status" value="1"/>
</dbReference>
<dbReference type="FunFam" id="3.40.50.300:FF:000788">
    <property type="entry name" value="DNA annealing helicase and endonuclease ZRANB3"/>
    <property type="match status" value="1"/>
</dbReference>
<dbReference type="FunFam" id="2.30.30.380:FF:000011">
    <property type="entry name" value="Zinc finger RANBP2-type containing 3"/>
    <property type="match status" value="1"/>
</dbReference>
<dbReference type="Gene3D" id="1.10.30.50">
    <property type="match status" value="1"/>
</dbReference>
<dbReference type="Gene3D" id="3.40.50.300">
    <property type="entry name" value="P-loop containing nucleotide triphosphate hydrolases"/>
    <property type="match status" value="1"/>
</dbReference>
<dbReference type="Gene3D" id="3.40.50.10810">
    <property type="entry name" value="Tandem AAA-ATPase domain"/>
    <property type="match status" value="1"/>
</dbReference>
<dbReference type="Gene3D" id="2.30.30.380">
    <property type="entry name" value="Zn-finger domain of Sec23/24"/>
    <property type="match status" value="1"/>
</dbReference>
<dbReference type="InterPro" id="IPR014001">
    <property type="entry name" value="Helicase_ATP-bd"/>
</dbReference>
<dbReference type="InterPro" id="IPR001650">
    <property type="entry name" value="Helicase_C-like"/>
</dbReference>
<dbReference type="InterPro" id="IPR002711">
    <property type="entry name" value="HNH"/>
</dbReference>
<dbReference type="InterPro" id="IPR003615">
    <property type="entry name" value="HNH_nuc"/>
</dbReference>
<dbReference type="InterPro" id="IPR027417">
    <property type="entry name" value="P-loop_NTPase"/>
</dbReference>
<dbReference type="InterPro" id="IPR038718">
    <property type="entry name" value="SNF2-like_sf"/>
</dbReference>
<dbReference type="InterPro" id="IPR049730">
    <property type="entry name" value="SNF2/RAD54-like_C"/>
</dbReference>
<dbReference type="InterPro" id="IPR000330">
    <property type="entry name" value="SNF2_N"/>
</dbReference>
<dbReference type="InterPro" id="IPR001876">
    <property type="entry name" value="Znf_RanBP2"/>
</dbReference>
<dbReference type="InterPro" id="IPR036443">
    <property type="entry name" value="Znf_RanBP2_sf"/>
</dbReference>
<dbReference type="PANTHER" id="PTHR45766:SF3">
    <property type="entry name" value="DNA ANNEALING HELICASE AND ENDONUCLEASE ZRANB3"/>
    <property type="match status" value="1"/>
</dbReference>
<dbReference type="PANTHER" id="PTHR45766">
    <property type="entry name" value="DNA ANNEALING HELICASE AND ENDONUCLEASE ZRANB3 FAMILY MEMBER"/>
    <property type="match status" value="1"/>
</dbReference>
<dbReference type="Pfam" id="PF00271">
    <property type="entry name" value="Helicase_C"/>
    <property type="match status" value="1"/>
</dbReference>
<dbReference type="Pfam" id="PF01844">
    <property type="entry name" value="HNH"/>
    <property type="match status" value="1"/>
</dbReference>
<dbReference type="Pfam" id="PF00176">
    <property type="entry name" value="SNF2-rel_dom"/>
    <property type="match status" value="1"/>
</dbReference>
<dbReference type="SMART" id="SM00487">
    <property type="entry name" value="DEXDc"/>
    <property type="match status" value="1"/>
</dbReference>
<dbReference type="SMART" id="SM00490">
    <property type="entry name" value="HELICc"/>
    <property type="match status" value="1"/>
</dbReference>
<dbReference type="SMART" id="SM00507">
    <property type="entry name" value="HNHc"/>
    <property type="match status" value="1"/>
</dbReference>
<dbReference type="SMART" id="SM00547">
    <property type="entry name" value="ZnF_RBZ"/>
    <property type="match status" value="1"/>
</dbReference>
<dbReference type="SUPFAM" id="SSF52540">
    <property type="entry name" value="P-loop containing nucleoside triphosphate hydrolases"/>
    <property type="match status" value="2"/>
</dbReference>
<dbReference type="SUPFAM" id="SSF90209">
    <property type="entry name" value="Ran binding protein zinc finger-like"/>
    <property type="match status" value="1"/>
</dbReference>
<dbReference type="PROSITE" id="PS51192">
    <property type="entry name" value="HELICASE_ATP_BIND_1"/>
    <property type="match status" value="1"/>
</dbReference>
<dbReference type="PROSITE" id="PS51194">
    <property type="entry name" value="HELICASE_CTER"/>
    <property type="match status" value="1"/>
</dbReference>
<dbReference type="PROSITE" id="PS01358">
    <property type="entry name" value="ZF_RANBP2_1"/>
    <property type="match status" value="1"/>
</dbReference>
<dbReference type="PROSITE" id="PS50199">
    <property type="entry name" value="ZF_RANBP2_2"/>
    <property type="match status" value="1"/>
</dbReference>
<protein>
    <recommendedName>
        <fullName>DNA annealing helicase and endonuclease ZRANB3</fullName>
    </recommendedName>
    <alternativeName>
        <fullName>Annealing helicase 2</fullName>
        <shortName>AH2</shortName>
    </alternativeName>
    <alternativeName>
        <fullName>Zinc finger Ran-binding domain-containing protein 3</fullName>
    </alternativeName>
    <domain>
        <recommendedName>
            <fullName>DNA annealing helicase ZRANB3</fullName>
            <ecNumber>3.6.4.-</ecNumber>
        </recommendedName>
    </domain>
    <domain>
        <recommendedName>
            <fullName>Endonuclease ZRANB3</fullName>
            <ecNumber>3.1.-.-</ecNumber>
        </recommendedName>
    </domain>
</protein>